<evidence type="ECO:0000250" key="1">
    <source>
        <dbReference type="UniProtKB" id="Q60766"/>
    </source>
</evidence>
<evidence type="ECO:0000250" key="2">
    <source>
        <dbReference type="UniProtKB" id="Q9QZ85"/>
    </source>
</evidence>
<evidence type="ECO:0000255" key="3">
    <source>
        <dbReference type="PROSITE-ProRule" id="PRU01053"/>
    </source>
</evidence>
<evidence type="ECO:0000269" key="4">
    <source>
    </source>
</evidence>
<evidence type="ECO:0000269" key="5">
    <source>
    </source>
</evidence>
<evidence type="ECO:0000269" key="6">
    <source>
    </source>
</evidence>
<evidence type="ECO:0000269" key="7">
    <source>
    </source>
</evidence>
<evidence type="ECO:0000269" key="8">
    <source>
    </source>
</evidence>
<evidence type="ECO:0000269" key="9">
    <source>
    </source>
</evidence>
<evidence type="ECO:0000269" key="10">
    <source>
    </source>
</evidence>
<evidence type="ECO:0000269" key="11">
    <source>
    </source>
</evidence>
<evidence type="ECO:0000269" key="12">
    <source>
    </source>
</evidence>
<evidence type="ECO:0000269" key="13">
    <source>
    </source>
</evidence>
<evidence type="ECO:0000269" key="14">
    <source>
    </source>
</evidence>
<evidence type="ECO:0000269" key="15">
    <source>
    </source>
</evidence>
<evidence type="ECO:0000269" key="16">
    <source>
    </source>
</evidence>
<evidence type="ECO:0000269" key="17">
    <source>
    </source>
</evidence>
<evidence type="ECO:0000269" key="18">
    <source>
    </source>
</evidence>
<evidence type="ECO:0000269" key="19">
    <source>
    </source>
</evidence>
<evidence type="ECO:0000269" key="20">
    <source>
    </source>
</evidence>
<evidence type="ECO:0000269" key="21">
    <source>
    </source>
</evidence>
<evidence type="ECO:0000269" key="22">
    <source>
    </source>
</evidence>
<evidence type="ECO:0000303" key="23">
    <source>
    </source>
</evidence>
<evidence type="ECO:0000303" key="24">
    <source>
    </source>
</evidence>
<evidence type="ECO:0000303" key="25">
    <source>
    </source>
</evidence>
<evidence type="ECO:0000305" key="26"/>
<evidence type="ECO:0000305" key="27">
    <source>
    </source>
</evidence>
<evidence type="ECO:0000312" key="28">
    <source>
        <dbReference type="HGNC" id="HGNC:29597"/>
    </source>
</evidence>
<name>IRGM_HUMAN</name>
<organism>
    <name type="scientific">Homo sapiens</name>
    <name type="common">Human</name>
    <dbReference type="NCBI Taxonomy" id="9606"/>
    <lineage>
        <taxon>Eukaryota</taxon>
        <taxon>Metazoa</taxon>
        <taxon>Chordata</taxon>
        <taxon>Craniata</taxon>
        <taxon>Vertebrata</taxon>
        <taxon>Euteleostomi</taxon>
        <taxon>Mammalia</taxon>
        <taxon>Eutheria</taxon>
        <taxon>Euarchontoglires</taxon>
        <taxon>Primates</taxon>
        <taxon>Haplorrhini</taxon>
        <taxon>Catarrhini</taxon>
        <taxon>Hominidae</taxon>
        <taxon>Homo</taxon>
    </lineage>
</organism>
<sequence>MEAMNVEKASADGNLPEVISNIKETLKIVSRTPVNITMAGDSGNGMSTFISALRNTGHEGKASPPTELVKATQRCASYFSSHFSNVVLWDLPGTGSATTTLENYLMEMQFNRYDFIMVASAQFSMNHVMLAKTAEDMGKKFYIVWTKLDMDLSTGALPEVQLLQIRENVLENLQKERVCEY</sequence>
<feature type="chain" id="PRO_0000325749" description="Immunity-related GTPase family M protein">
    <location>
        <begin position="1"/>
        <end position="181"/>
    </location>
</feature>
<feature type="domain" description="IRG-type G" evidence="3">
    <location>
        <begin position="32"/>
        <end position="181"/>
    </location>
</feature>
<feature type="binding site" evidence="2">
    <location>
        <begin position="41"/>
        <end position="48"/>
    </location>
    <ligand>
        <name>GTP</name>
        <dbReference type="ChEBI" id="CHEBI:37565"/>
    </ligand>
</feature>
<feature type="binding site" evidence="2">
    <location>
        <begin position="66"/>
        <end position="70"/>
    </location>
    <ligand>
        <name>GTP</name>
        <dbReference type="ChEBI" id="CHEBI:37565"/>
    </ligand>
</feature>
<feature type="binding site" evidence="2">
    <location>
        <begin position="147"/>
        <end position="149"/>
    </location>
    <ligand>
        <name>GTP</name>
        <dbReference type="ChEBI" id="CHEBI:37565"/>
    </ligand>
</feature>
<feature type="splice variant" id="VSP_061869" description="In isoform IRGMb.">
    <original>VCEY</original>
    <variation>LACHEKYLKSTPENSTRPRNIPSRRKLYVNLLRIFNS</variation>
    <location>
        <begin position="178"/>
        <end position="181"/>
    </location>
</feature>
<feature type="splice variant" id="VSP_061870" description="In isoform IRGMc.">
    <original>VCEY</original>
    <variation>SSRNQQVYPNHSHVPLAC</variation>
    <location>
        <begin position="178"/>
        <end position="181"/>
    </location>
</feature>
<feature type="splice variant" id="VSP_061871" description="In isoform IRGMd.">
    <original>VCEY</original>
    <variation>LACHEKYLKSTPENSTRPRNINLCS</variation>
    <location>
        <begin position="178"/>
        <end position="181"/>
    </location>
</feature>
<feature type="sequence variant" id="VAR_039899" description="In dbSNP:rs180802994." evidence="6">
    <original>E</original>
    <variation>D</variation>
    <location>
        <position position="17"/>
    </location>
</feature>
<feature type="sequence variant" id="VAR_039900" description="In dbSNP:rs72553867." evidence="6">
    <original>T</original>
    <variation>K</variation>
    <location>
        <position position="94"/>
    </location>
</feature>
<feature type="mutagenesis site" description="Abolished GTPase activity, preventing interaction with STX17 and/or NLRP3." evidence="16 17">
    <original>S</original>
    <variation>N</variation>
    <location>
        <position position="47"/>
    </location>
</feature>
<comment type="function">
    <text evidence="1 5 7 14 16 17 18 19 20 21 22">Immunity-related GTPase that plays important roles in innate immunity and inflammatory response (PubMed:16888103, PubMed:19165925, PubMed:25891078). Acts as a dynamin-like protein that binds to intracellular membranes and promotes remodeling and trafficking of those membranes (By similarity). Required for clearance of acute protozoan and bacterial infections by interacting with autophagy and lysosome regulatory proteins, thereby promoting the fusion of phagosomes with lysosomes for efficient degradation of cargo including microbes (PubMed:16888103, PubMed:25891078, PubMed:29420192, PubMed:32939830). Regulates selective autophagy, including xenophagy and mitophagy, both directly and indirectly (PubMed:16888103, PubMed:25891078, PubMed:29420192, PubMed:32939830). Directly regulates autophagy by acting as a molecular adapter that promotes the coassembly of the core autophagy machinery to mediate antimicrobial defense: IRGM (1) activates AMPK, which in turn phosphorylates ULK1 and BECN1 to induce autophagy, (2) promotes the coassembly of ULK1 and BECN1, enhancing BECN1-interacting partners and (3) influences the composition of the BECN1 complex, by competing with the negative regulators BCL2 and RUBCN, to trigger autophagy (PubMed:25891078). Also activates autophagy by promoting recruitment of STX17 to autophagosomes (PubMed:29420192). In collaboration with ATG8 proteins, regulate lysosomal biogenesis, a fundamental process for any autophagic pathway, by promoting TFEB dephosphorylation (PubMed:32753672). Also modulates autophagy by assisting with autophagosome formation and preventing lysosomal deacidification (By similarity). While activating autophagy, acts as a key negative regulator of the inflammatory and interferon responses both by (1) promoting mitophagy and (2) mediating autophagy-dependent degradation of effectors of the inflammatory response (PubMed:30612879, PubMed:32715615, PubMed:36221902). Promotes degradation of damaged and IFNG/IFN-gamma-stressed mitochondria via mitophagy, preventing cytosolic release of ligands that activate inflammation (PubMed:32715615). Acts as a suppressor of inflammation by promoting recruitment of inflammation effectors, such as CGAS, RIGI/RIG-I and NLRP3, to autophagosome membranes, leading to their SQSTM1/p62-dependent autophagic degradation (PubMed:30612879, PubMed:32715615). Also directly inhibits assembly of the NLRP3 inflammasome by preventing the association between NLRP3 and PYCARD (PubMed:30612879). Acts as a negative regulator of antiviral innate immune response by suppressing the RIPK2-dependent pro-inflammatory response: mediates recruitment of RIPosomes, composed of RIPK2 and NOD1 or NOD2, to autophagosome membranes, promoting their SQSTM1/p62-dependent autophagic degradation (PubMed:34467632, PubMed:36221902).</text>
</comment>
<comment type="function">
    <molecule>Isoform IRGMd</molecule>
    <text evidence="12">Acts as a positive regulator of mitophagy in response to intracellular mycobacteria infection: specifically binds cardiolipin, leading to its translocation to mitochondria, where it promotes affected mitochondrial fission and mitophagy.</text>
</comment>
<comment type="function">
    <text evidence="15">(Microbial infection) Following infection by hepatitis C virus (HCV), promotes HCV-triggered membrane remodeling, leading to autophagy and Golgi fragmentation, a step required for HCV replication.</text>
</comment>
<comment type="catalytic activity">
    <reaction evidence="16 17">
        <text>GTP + H2O = GDP + phosphate + H(+)</text>
        <dbReference type="Rhea" id="RHEA:19669"/>
        <dbReference type="ChEBI" id="CHEBI:15377"/>
        <dbReference type="ChEBI" id="CHEBI:15378"/>
        <dbReference type="ChEBI" id="CHEBI:37565"/>
        <dbReference type="ChEBI" id="CHEBI:43474"/>
        <dbReference type="ChEBI" id="CHEBI:58189"/>
    </reaction>
    <physiologicalReaction direction="left-to-right" evidence="16 17">
        <dbReference type="Rhea" id="RHEA:19670"/>
    </physiologicalReaction>
</comment>
<comment type="subunit">
    <text evidence="14 16 17 18 19 22">Interacts with ULK1; promoting the coassembly of ULK1 and BECN1 (PubMed:25891078). Interacts with BECN1; enhancing BECN1-interacting partners and influencing the composition of the BECN1 complex (PubMed:25891078). Interacts with ATG16L1 (PubMed:25891078). Interacts with NOD2; promoting IRGM 'Lys-63'-linked polyubiquitination, which is required for interactions with the core autophagy factors (PubMed:25891078). Interacts with STX17; promoting STX17 recruitment to autophagosomes (PubMed:29420192). Interacts with ATG8 proteins (GABARAP, GABARAPL1, GABARAPL2, MAP1LC3A, MAP1LC3B and MAP1LC3C); promoting STX17 recruitment to autophagosomes (PubMed:29420192). Interacts with TFEB; promoting association between TFEB and PPP3CB and TFEB dephosphorylation (PubMed:32753672). Interacts with PPP3CB; promoting association between TFEB and PPP3CB and TFEB dephosphorylation (PubMed:32753672). Interacts with NLRP3; preventing NLRP3 inflammasome assembly and promoting SQSTM1/p62-dependent autophagic degradation of NLRP3 (PubMed:30612879). Interacts with CGAS; promoting SQSTM1/p62-dependent autophagic degradation of CGAS (PubMed:32715615). Interacts with RIGI/RIG-I; promoting SQSTM1/p62-dependent autophagic degradation of RIGI/RIG-I (PubMed:32715615). Interacts with NOD1; promoting SQSTM1/p62-dependent autophagic degradation of RIGI/RIG-I (PubMed:36221902). Interacts with NOD2; promoting SQSTM1/p62-dependent autophagic degradation of RIGI/RIG-I (PubMed:36221902). Interacts with RIPK2; promoting SQSTM1/p62-dependent autophagic degradation of RIGI/RIG-I (PubMed:36221902).</text>
</comment>
<comment type="interaction">
    <interactant intactId="EBI-20844678">
        <id>A1A4Y4</id>
    </interactant>
    <interactant intactId="EBI-748974">
        <id>Q96CV9</id>
        <label>OPTN</label>
    </interactant>
    <organismsDiffer>false</organismsDiffer>
    <experiments>3</experiments>
</comment>
<comment type="subcellular location">
    <subcellularLocation>
        <location evidence="15">Golgi apparatus membrane</location>
    </subcellularLocation>
    <subcellularLocation>
        <location evidence="1">Cell membrane</location>
    </subcellularLocation>
    <subcellularLocation>
        <location evidence="1">Cytoplasmic vesicle</location>
        <location evidence="1">Phagosome membrane</location>
    </subcellularLocation>
    <subcellularLocation>
        <location evidence="16">Cytoplasmic vesicle</location>
        <location evidence="16">Autophagosome membrane</location>
    </subcellularLocation>
    <subcellularLocation>
        <location evidence="1">Lysosome membrane</location>
    </subcellularLocation>
    <subcellularLocation>
        <location evidence="1">Late endosome membrane</location>
    </subcellularLocation>
    <subcellularLocation>
        <location evidence="1">Mitochondrion membrane</location>
    </subcellularLocation>
    <subcellularLocation>
        <location evidence="1">Cell projection</location>
        <location evidence="1">Phagocytic cup</location>
    </subcellularLocation>
    <text evidence="1">Behaves like an integral membrane protein. Recruited to the plasma membrane around forming phagocytic cups, it remains associated with maturing phagosomes. Association with phagosomes is dependent on nucleotide-binding but is IFNG-independent. Also detected in late endosomes and lysosomes.</text>
</comment>
<comment type="subcellular location">
    <molecule>Isoform IRGMd</molecule>
    <subcellularLocation>
        <location evidence="12">Mitochondrion</location>
    </subcellularLocation>
</comment>
<comment type="alternative products">
    <event type="alternative splicing"/>
    <isoform>
        <id>A1A4Y4-1</id>
        <name evidence="25">IRGMa</name>
        <sequence type="displayed"/>
    </isoform>
    <isoform>
        <id>A1A4Y4-2</id>
        <name evidence="25">IRGMb</name>
        <sequence type="described" ref="VSP_061869"/>
    </isoform>
    <isoform>
        <id>A1A4Y4-3</id>
        <name evidence="25">IRGMc</name>
        <name evidence="25">IRGMe</name>
        <sequence type="described" ref="VSP_061870"/>
    </isoform>
    <isoform>
        <id>A1A4Y4-4</id>
        <name evidence="25">IRGMd</name>
        <sequence type="described" ref="VSP_061871"/>
    </isoform>
</comment>
<comment type="tissue specificity">
    <text evidence="5 6">Widely expressed (at protein level) (PubMed:16888103). Expressed in several tissues including colon, small bowel and peripheral blood leukocytes (PubMed:17554261).</text>
</comment>
<comment type="induction">
    <text evidence="4">Not up-regulated by IFNG/IFN-gamma.</text>
</comment>
<comment type="domain">
    <text evidence="9">The G5 motif of the IRG-type G domain is missing because the IRGM protein is truncated in anthropoids.</text>
</comment>
<comment type="PTM">
    <text evidence="14">Ubiquitinated via 'Lys-63'-linked polyubiquitination in a NOD2-dependent process. 'Lys-63'-linked polyubiquitination is required for interactions with the core autophagy factors.</text>
</comment>
<comment type="polymorphism">
    <text evidence="10">Genetic variations in the IRGM promoter determine Mycobacterium tuberculosis susceptibility [MIM:607948] (PubMed:19750224). People that are homozygote for -261C-T (rs9637876) variant, which is located within an Alu sequence in the promoter region, are associated with protection from M.tuberculosis (PubMed:19750224). In contrast, -261T-T allele is significantly associated with protection from pulmonary tuberculosis caused by M.tuberculosis, but not by M.africanum, a strain restricted to West Africa, or M.bovis (PubMed:19750224).</text>
</comment>
<comment type="disease" evidence="6 7 8 11 13">
    <disease id="DI-03080">
        <name>Inflammatory bowel disease 19</name>
        <acronym>IBD19</acronym>
        <description>A chronic, relapsing inflammation of the gastrointestinal tract with a complex etiology. It is subdivided into Crohn disease and ulcerative colitis phenotypes. Crohn disease may affect any part of the gastrointestinal tract from the mouth to the anus, but most frequently it involves the terminal ileum and colon. Bowel inflammation is transmural and discontinuous; it may contain granulomas or be associated with intestinal or perianal fistulas. In contrast, in ulcerative colitis, the inflammation is continuous and limited to rectal and colonic mucosal layers; fistulas and granulomas are not observed. Both diseases include extraintestinal inflammation of the skin, eyes, or joints.</description>
        <dbReference type="MIM" id="612278"/>
    </disease>
    <text>Disease susceptibility is associated with variants affecting the gene represented in this entry.</text>
</comment>
<comment type="miscellaneous">
    <text evidence="27">There is a huge difference in terms of sequence and regulation of expression compared to the mouse ortholog and hence, the function might be slightly different.</text>
</comment>
<comment type="similarity">
    <text evidence="3">Belongs to the TRAFAC class dynamin-like GTPase superfamily. IRG family.</text>
</comment>
<comment type="sequence caution" evidence="26">
    <conflict type="erroneous initiation">
        <sequence resource="EMBL-CDS" id="AAI28169"/>
    </conflict>
</comment>
<comment type="sequence caution" evidence="26">
    <conflict type="erroneous initiation">
        <sequence resource="EMBL-CDS" id="EAW61704"/>
    </conflict>
</comment>
<protein>
    <recommendedName>
        <fullName evidence="26">Immunity-related GTPase family M protein</fullName>
        <ecNumber evidence="16 17">3.6.5.-</ecNumber>
    </recommendedName>
    <alternativeName>
        <fullName>Immunity-related GTPase family M protein 1</fullName>
    </alternativeName>
    <alternativeName>
        <fullName>Interferon-inducible protein 1</fullName>
    </alternativeName>
    <alternativeName>
        <fullName evidence="23">LPS-stimulated RAW 264.7 macrophage protein 47 homolog</fullName>
        <shortName evidence="23">LRG-47</shortName>
    </alternativeName>
</protein>
<dbReference type="EC" id="3.6.5.-" evidence="16 17"/>
<dbReference type="EMBL" id="EU742619">
    <property type="protein sequence ID" value="ACF21844.1"/>
    <property type="molecule type" value="mRNA"/>
</dbReference>
<dbReference type="EMBL" id="AC010441">
    <property type="status" value="NOT_ANNOTATED_CDS"/>
    <property type="molecule type" value="Genomic_DNA"/>
</dbReference>
<dbReference type="EMBL" id="FJ824056">
    <property type="protein sequence ID" value="ACO88909.1"/>
    <property type="molecule type" value="Genomic_DNA"/>
</dbReference>
<dbReference type="EMBL" id="CH471062">
    <property type="protein sequence ID" value="EAW61704.1"/>
    <property type="status" value="ALT_INIT"/>
    <property type="molecule type" value="Genomic_DNA"/>
</dbReference>
<dbReference type="EMBL" id="BC128167">
    <property type="protein sequence ID" value="AAI28168.1"/>
    <property type="molecule type" value="mRNA"/>
</dbReference>
<dbReference type="EMBL" id="BC128168">
    <property type="protein sequence ID" value="AAI28169.1"/>
    <property type="status" value="ALT_INIT"/>
    <property type="molecule type" value="mRNA"/>
</dbReference>
<dbReference type="CCDS" id="CCDS47313.1">
    <molecule id="A1A4Y4-1"/>
</dbReference>
<dbReference type="RefSeq" id="NP_001139277.1">
    <molecule id="A1A4Y4-1"/>
    <property type="nucleotide sequence ID" value="NM_001145805.2"/>
</dbReference>
<dbReference type="RefSeq" id="NP_001333486.1">
    <molecule id="A1A4Y4-2"/>
    <property type="nucleotide sequence ID" value="NM_001346557.2"/>
</dbReference>
<dbReference type="SMR" id="A1A4Y4"/>
<dbReference type="BioGRID" id="131358">
    <property type="interactions" value="27"/>
</dbReference>
<dbReference type="FunCoup" id="A1A4Y4">
    <property type="interactions" value="186"/>
</dbReference>
<dbReference type="IntAct" id="A1A4Y4">
    <property type="interactions" value="30"/>
</dbReference>
<dbReference type="STRING" id="9606.ENSP00000428220"/>
<dbReference type="ChEMBL" id="CHEMBL5169093"/>
<dbReference type="iPTMnet" id="A1A4Y4"/>
<dbReference type="PhosphoSitePlus" id="A1A4Y4"/>
<dbReference type="BioMuta" id="IRGM"/>
<dbReference type="MassIVE" id="A1A4Y4"/>
<dbReference type="PaxDb" id="9606-ENSP00000428220"/>
<dbReference type="Antibodypedia" id="28102">
    <property type="antibodies" value="252 antibodies from 27 providers"/>
</dbReference>
<dbReference type="DNASU" id="345611"/>
<dbReference type="Ensembl" id="ENST00000522154.2">
    <molecule id="A1A4Y4-1"/>
    <property type="protein sequence ID" value="ENSP00000428220.1"/>
    <property type="gene ID" value="ENSG00000237693.5"/>
</dbReference>
<dbReference type="GeneID" id="345611"/>
<dbReference type="KEGG" id="hsa:345611"/>
<dbReference type="MANE-Select" id="ENST00000522154.2">
    <property type="protein sequence ID" value="ENSP00000428220.1"/>
    <property type="RefSeq nucleotide sequence ID" value="NM_001145805.2"/>
    <property type="RefSeq protein sequence ID" value="NP_001139277.1"/>
</dbReference>
<dbReference type="UCSC" id="uc010jhk.3">
    <molecule id="A1A4Y4-1"/>
    <property type="organism name" value="human"/>
</dbReference>
<dbReference type="UCSC" id="uc063itc.1">
    <property type="organism name" value="human"/>
</dbReference>
<dbReference type="AGR" id="HGNC:29597"/>
<dbReference type="CTD" id="345611"/>
<dbReference type="DisGeNET" id="345611"/>
<dbReference type="GeneCards" id="IRGM"/>
<dbReference type="HGNC" id="HGNC:29597">
    <property type="gene designation" value="IRGM"/>
</dbReference>
<dbReference type="HPA" id="ENSG00000237693">
    <property type="expression patterns" value="Not detected"/>
</dbReference>
<dbReference type="MalaCards" id="IRGM"/>
<dbReference type="MIM" id="607948">
    <property type="type" value="phenotype"/>
</dbReference>
<dbReference type="MIM" id="608212">
    <property type="type" value="gene"/>
</dbReference>
<dbReference type="MIM" id="612278">
    <property type="type" value="phenotype"/>
</dbReference>
<dbReference type="neXtProt" id="NX_A1A4Y4"/>
<dbReference type="OpenTargets" id="ENSG00000237693"/>
<dbReference type="PharmGKB" id="PA142671652"/>
<dbReference type="VEuPathDB" id="HostDB:ENSG00000237693"/>
<dbReference type="eggNOG" id="ENOG502QS9R">
    <property type="taxonomic scope" value="Eukaryota"/>
</dbReference>
<dbReference type="GeneTree" id="ENSGT00950000183007"/>
<dbReference type="HOGENOM" id="CLU_015342_0_0_1"/>
<dbReference type="InParanoid" id="A1A4Y4"/>
<dbReference type="OMA" id="MIISSER"/>
<dbReference type="OrthoDB" id="422720at2759"/>
<dbReference type="PAN-GO" id="A1A4Y4">
    <property type="GO annotations" value="4 GO annotations based on evolutionary models"/>
</dbReference>
<dbReference type="PhylomeDB" id="A1A4Y4"/>
<dbReference type="PathwayCommons" id="A1A4Y4"/>
<dbReference type="SignaLink" id="A1A4Y4"/>
<dbReference type="BioGRID-ORCS" id="345611">
    <property type="hits" value="3 hits in 1147 CRISPR screens"/>
</dbReference>
<dbReference type="ChiTaRS" id="IRGM">
    <property type="organism name" value="human"/>
</dbReference>
<dbReference type="GeneWiki" id="IRGM"/>
<dbReference type="GenomeRNAi" id="345611"/>
<dbReference type="Pharos" id="A1A4Y4">
    <property type="development level" value="Tbio"/>
</dbReference>
<dbReference type="PRO" id="PR:A1A4Y4"/>
<dbReference type="Proteomes" id="UP000005640">
    <property type="component" value="Chromosome 5"/>
</dbReference>
<dbReference type="RNAct" id="A1A4Y4">
    <property type="molecule type" value="protein"/>
</dbReference>
<dbReference type="Bgee" id="ENSG00000237693">
    <property type="expression patterns" value="Expressed in primordial germ cell in gonad and 99 other cell types or tissues"/>
</dbReference>
<dbReference type="ExpressionAtlas" id="A1A4Y4">
    <property type="expression patterns" value="baseline and differential"/>
</dbReference>
<dbReference type="GO" id="GO:0000421">
    <property type="term" value="C:autophagosome membrane"/>
    <property type="evidence" value="ECO:0000314"/>
    <property type="project" value="UniProt"/>
</dbReference>
<dbReference type="GO" id="GO:0042995">
    <property type="term" value="C:cell projection"/>
    <property type="evidence" value="ECO:0007669"/>
    <property type="project" value="UniProtKB-KW"/>
</dbReference>
<dbReference type="GO" id="GO:0005829">
    <property type="term" value="C:cytosol"/>
    <property type="evidence" value="ECO:0000314"/>
    <property type="project" value="UniProtKB"/>
</dbReference>
<dbReference type="GO" id="GO:0005789">
    <property type="term" value="C:endoplasmic reticulum membrane"/>
    <property type="evidence" value="ECO:0000318"/>
    <property type="project" value="GO_Central"/>
</dbReference>
<dbReference type="GO" id="GO:0005794">
    <property type="term" value="C:Golgi apparatus"/>
    <property type="evidence" value="ECO:0000314"/>
    <property type="project" value="UniProtKB"/>
</dbReference>
<dbReference type="GO" id="GO:0000139">
    <property type="term" value="C:Golgi membrane"/>
    <property type="evidence" value="ECO:0000314"/>
    <property type="project" value="UniProtKB"/>
</dbReference>
<dbReference type="GO" id="GO:0031902">
    <property type="term" value="C:late endosome membrane"/>
    <property type="evidence" value="ECO:0007669"/>
    <property type="project" value="UniProtKB-SubCell"/>
</dbReference>
<dbReference type="GO" id="GO:0005765">
    <property type="term" value="C:lysosomal membrane"/>
    <property type="evidence" value="ECO:0000250"/>
    <property type="project" value="UniProtKB"/>
</dbReference>
<dbReference type="GO" id="GO:0031966">
    <property type="term" value="C:mitochondrial membrane"/>
    <property type="evidence" value="ECO:0000250"/>
    <property type="project" value="UniProtKB"/>
</dbReference>
<dbReference type="GO" id="GO:0005739">
    <property type="term" value="C:mitochondrion"/>
    <property type="evidence" value="ECO:0000314"/>
    <property type="project" value="UniProtKB"/>
</dbReference>
<dbReference type="GO" id="GO:0001891">
    <property type="term" value="C:phagocytic cup"/>
    <property type="evidence" value="ECO:0007669"/>
    <property type="project" value="UniProtKB-SubCell"/>
</dbReference>
<dbReference type="GO" id="GO:0030670">
    <property type="term" value="C:phagocytic vesicle membrane"/>
    <property type="evidence" value="ECO:0007669"/>
    <property type="project" value="UniProtKB-SubCell"/>
</dbReference>
<dbReference type="GO" id="GO:0051434">
    <property type="term" value="F:BH3 domain binding"/>
    <property type="evidence" value="ECO:0000315"/>
    <property type="project" value="UniProtKB"/>
</dbReference>
<dbReference type="GO" id="GO:0050700">
    <property type="term" value="F:CARD domain binding"/>
    <property type="evidence" value="ECO:0000315"/>
    <property type="project" value="UniProtKB"/>
</dbReference>
<dbReference type="GO" id="GO:1901612">
    <property type="term" value="F:cardiolipin binding"/>
    <property type="evidence" value="ECO:0000314"/>
    <property type="project" value="UniProtKB"/>
</dbReference>
<dbReference type="GO" id="GO:0003925">
    <property type="term" value="F:G protein activity"/>
    <property type="evidence" value="ECO:0000314"/>
    <property type="project" value="UniProt"/>
</dbReference>
<dbReference type="GO" id="GO:0005525">
    <property type="term" value="F:GTP binding"/>
    <property type="evidence" value="ECO:0007669"/>
    <property type="project" value="UniProtKB-KW"/>
</dbReference>
<dbReference type="GO" id="GO:0003924">
    <property type="term" value="F:GTPase activity"/>
    <property type="evidence" value="ECO:0000314"/>
    <property type="project" value="UniProtKB"/>
</dbReference>
<dbReference type="GO" id="GO:0019901">
    <property type="term" value="F:protein kinase binding"/>
    <property type="evidence" value="ECO:0000353"/>
    <property type="project" value="UniProtKB"/>
</dbReference>
<dbReference type="GO" id="GO:0043539">
    <property type="term" value="F:protein serine/threonine kinase activator activity"/>
    <property type="evidence" value="ECO:0000314"/>
    <property type="project" value="UniProt"/>
</dbReference>
<dbReference type="GO" id="GO:0030674">
    <property type="term" value="F:protein-macromolecule adaptor activity"/>
    <property type="evidence" value="ECO:0000314"/>
    <property type="project" value="UniProtKB"/>
</dbReference>
<dbReference type="GO" id="GO:0000045">
    <property type="term" value="P:autophagosome assembly"/>
    <property type="evidence" value="ECO:0000315"/>
    <property type="project" value="UniProtKB"/>
</dbReference>
<dbReference type="GO" id="GO:0097352">
    <property type="term" value="P:autophagosome maturation"/>
    <property type="evidence" value="ECO:0000250"/>
    <property type="project" value="UniProtKB"/>
</dbReference>
<dbReference type="GO" id="GO:0061762">
    <property type="term" value="P:CAMKK-AMPK signaling cascade"/>
    <property type="evidence" value="ECO:0000315"/>
    <property type="project" value="UniProtKB"/>
</dbReference>
<dbReference type="GO" id="GO:0035458">
    <property type="term" value="P:cellular response to interferon-beta"/>
    <property type="evidence" value="ECO:0000318"/>
    <property type="project" value="GO_Central"/>
</dbReference>
<dbReference type="GO" id="GO:0071222">
    <property type="term" value="P:cellular response to lipopolysaccharide"/>
    <property type="evidence" value="ECO:0000315"/>
    <property type="project" value="UniProtKB"/>
</dbReference>
<dbReference type="GO" id="GO:0098586">
    <property type="term" value="P:cellular response to virus"/>
    <property type="evidence" value="ECO:0000315"/>
    <property type="project" value="UniProtKB"/>
</dbReference>
<dbReference type="GO" id="GO:0042742">
    <property type="term" value="P:defense response to bacterium"/>
    <property type="evidence" value="ECO:0000314"/>
    <property type="project" value="UniProtKB"/>
</dbReference>
<dbReference type="GO" id="GO:0050829">
    <property type="term" value="P:defense response to Gram-negative bacterium"/>
    <property type="evidence" value="ECO:0000315"/>
    <property type="project" value="UniProtKB"/>
</dbReference>
<dbReference type="GO" id="GO:0006954">
    <property type="term" value="P:inflammatory response"/>
    <property type="evidence" value="ECO:0007669"/>
    <property type="project" value="UniProtKB-KW"/>
</dbReference>
<dbReference type="GO" id="GO:0045087">
    <property type="term" value="P:innate immune response"/>
    <property type="evidence" value="ECO:0000315"/>
    <property type="project" value="UniProtKB"/>
</dbReference>
<dbReference type="GO" id="GO:0043124">
    <property type="term" value="P:negative regulation of canonical NF-kappaB signal transduction"/>
    <property type="evidence" value="ECO:0000314"/>
    <property type="project" value="UniProt"/>
</dbReference>
<dbReference type="GO" id="GO:0160049">
    <property type="term" value="P:negative regulation of cGAS/STING signaling pathway"/>
    <property type="evidence" value="ECO:0000314"/>
    <property type="project" value="UniProt"/>
</dbReference>
<dbReference type="GO" id="GO:0050687">
    <property type="term" value="P:negative regulation of defense response to virus"/>
    <property type="evidence" value="ECO:0000314"/>
    <property type="project" value="UniProtKB"/>
</dbReference>
<dbReference type="GO" id="GO:0050728">
    <property type="term" value="P:negative regulation of inflammatory response"/>
    <property type="evidence" value="ECO:0000314"/>
    <property type="project" value="UniProtKB"/>
</dbReference>
<dbReference type="GO" id="GO:1900226">
    <property type="term" value="P:negative regulation of NLRP3 inflammasome complex assembly"/>
    <property type="evidence" value="ECO:0000314"/>
    <property type="project" value="UniProtKB"/>
</dbReference>
<dbReference type="GO" id="GO:0032480">
    <property type="term" value="P:negative regulation of type I interferon production"/>
    <property type="evidence" value="ECO:0000314"/>
    <property type="project" value="UniProtKB"/>
</dbReference>
<dbReference type="GO" id="GO:0032689">
    <property type="term" value="P:negative regulation of type II interferon production"/>
    <property type="evidence" value="ECO:0000250"/>
    <property type="project" value="UniProtKB"/>
</dbReference>
<dbReference type="GO" id="GO:0070431">
    <property type="term" value="P:nucleotide-binding oligomerization domain containing 2 signaling pathway"/>
    <property type="evidence" value="ECO:0000315"/>
    <property type="project" value="UniProtKB"/>
</dbReference>
<dbReference type="GO" id="GO:1901098">
    <property type="term" value="P:positive regulation of autophagosome maturation"/>
    <property type="evidence" value="ECO:0000315"/>
    <property type="project" value="UniProtKB"/>
</dbReference>
<dbReference type="GO" id="GO:0010508">
    <property type="term" value="P:positive regulation of autophagy"/>
    <property type="evidence" value="ECO:0000314"/>
    <property type="project" value="UniProtKB"/>
</dbReference>
<dbReference type="GO" id="GO:1905673">
    <property type="term" value="P:positive regulation of lysosome organization"/>
    <property type="evidence" value="ECO:0000314"/>
    <property type="project" value="UniProtKB"/>
</dbReference>
<dbReference type="GO" id="GO:0043032">
    <property type="term" value="P:positive regulation of macrophage activation"/>
    <property type="evidence" value="ECO:0000250"/>
    <property type="project" value="UniProtKB"/>
</dbReference>
<dbReference type="GO" id="GO:0090141">
    <property type="term" value="P:positive regulation of mitochondrial fission"/>
    <property type="evidence" value="ECO:0000314"/>
    <property type="project" value="UniProtKB"/>
</dbReference>
<dbReference type="GO" id="GO:1901526">
    <property type="term" value="P:positive regulation of mitophagy"/>
    <property type="evidence" value="ECO:0000314"/>
    <property type="project" value="UniProtKB"/>
</dbReference>
<dbReference type="GO" id="GO:0033138">
    <property type="term" value="P:positive regulation of peptidyl-serine phosphorylation"/>
    <property type="evidence" value="ECO:0000315"/>
    <property type="project" value="UniProtKB"/>
</dbReference>
<dbReference type="GO" id="GO:0010800">
    <property type="term" value="P:positive regulation of peptidyl-threonine phosphorylation"/>
    <property type="evidence" value="ECO:0000315"/>
    <property type="project" value="UniProtKB"/>
</dbReference>
<dbReference type="GO" id="GO:0001934">
    <property type="term" value="P:positive regulation of protein phosphorylation"/>
    <property type="evidence" value="ECO:0000315"/>
    <property type="project" value="UniProtKB"/>
</dbReference>
<dbReference type="GO" id="GO:0071902">
    <property type="term" value="P:positive regulation of protein serine/threonine kinase activity"/>
    <property type="evidence" value="ECO:0000315"/>
    <property type="project" value="UniProtKB"/>
</dbReference>
<dbReference type="GO" id="GO:0060335">
    <property type="term" value="P:positive regulation of type II interferon-mediated signaling pathway"/>
    <property type="evidence" value="ECO:0000315"/>
    <property type="project" value="UniProtKB"/>
</dbReference>
<dbReference type="GO" id="GO:1904417">
    <property type="term" value="P:positive regulation of xenophagy"/>
    <property type="evidence" value="ECO:0000314"/>
    <property type="project" value="UniProtKB"/>
</dbReference>
<dbReference type="GO" id="GO:0031648">
    <property type="term" value="P:protein destabilization"/>
    <property type="evidence" value="ECO:0000315"/>
    <property type="project" value="UniProtKB"/>
</dbReference>
<dbReference type="GO" id="GO:0061739">
    <property type="term" value="P:protein lipidation involved in autophagosome assembly"/>
    <property type="evidence" value="ECO:0000315"/>
    <property type="project" value="UniProtKB"/>
</dbReference>
<dbReference type="GO" id="GO:0050821">
    <property type="term" value="P:protein stabilization"/>
    <property type="evidence" value="ECO:0000315"/>
    <property type="project" value="UniProtKB"/>
</dbReference>
<dbReference type="GO" id="GO:0071211">
    <property type="term" value="P:protein targeting to vacuole involved in autophagy"/>
    <property type="evidence" value="ECO:0000314"/>
    <property type="project" value="UniProtKB"/>
</dbReference>
<dbReference type="GO" id="GO:0065003">
    <property type="term" value="P:protein-containing complex assembly"/>
    <property type="evidence" value="ECO:0000314"/>
    <property type="project" value="UniProt"/>
</dbReference>
<dbReference type="GO" id="GO:0061635">
    <property type="term" value="P:regulation of protein complex stability"/>
    <property type="evidence" value="ECO:0000315"/>
    <property type="project" value="UniProtKB"/>
</dbReference>
<dbReference type="GO" id="GO:0043254">
    <property type="term" value="P:regulation of protein-containing complex assembly"/>
    <property type="evidence" value="ECO:0000315"/>
    <property type="project" value="UniProtKB"/>
</dbReference>
<dbReference type="FunFam" id="3.40.50.300:FF:000541">
    <property type="entry name" value="Immunity related GTPase M"/>
    <property type="match status" value="1"/>
</dbReference>
<dbReference type="Gene3D" id="3.40.50.300">
    <property type="entry name" value="P-loop containing nucleotide triphosphate hydrolases"/>
    <property type="match status" value="1"/>
</dbReference>
<dbReference type="InterPro" id="IPR030385">
    <property type="entry name" value="G_IRG_dom"/>
</dbReference>
<dbReference type="InterPro" id="IPR007743">
    <property type="entry name" value="Immunity-related_GTPase-like"/>
</dbReference>
<dbReference type="InterPro" id="IPR051515">
    <property type="entry name" value="IRG"/>
</dbReference>
<dbReference type="InterPro" id="IPR027417">
    <property type="entry name" value="P-loop_NTPase"/>
</dbReference>
<dbReference type="PANTHER" id="PTHR32341:SF9">
    <property type="entry name" value="IMMUNITY-RELATED GTPASE FAMILY M PROTEIN"/>
    <property type="match status" value="1"/>
</dbReference>
<dbReference type="PANTHER" id="PTHR32341">
    <property type="entry name" value="INTERFERON-INDUCIBLE GTPASE"/>
    <property type="match status" value="1"/>
</dbReference>
<dbReference type="Pfam" id="PF05049">
    <property type="entry name" value="IIGP"/>
    <property type="match status" value="1"/>
</dbReference>
<dbReference type="SUPFAM" id="SSF52540">
    <property type="entry name" value="P-loop containing nucleoside triphosphate hydrolases"/>
    <property type="match status" value="1"/>
</dbReference>
<dbReference type="PROSITE" id="PS51716">
    <property type="entry name" value="G_IRG"/>
    <property type="match status" value="1"/>
</dbReference>
<reference key="1">
    <citation type="journal article" date="2009" name="PLoS Genet.">
        <title>Death and resurrection of the human IRGM gene.</title>
        <authorList>
            <person name="Bekpen C."/>
            <person name="Marques-Bonet T."/>
            <person name="Alkan C."/>
            <person name="Antonacci F."/>
            <person name="Leogrande M.B."/>
            <person name="Ventura M."/>
            <person name="Kidd J.M."/>
            <person name="Siswara P."/>
            <person name="Howard J.C."/>
            <person name="Eichler E.E."/>
        </authorList>
    </citation>
    <scope>NUCLEOTIDE SEQUENCE [GENOMIC DNA / MRNA]</scope>
</reference>
<reference key="2">
    <citation type="journal article" date="2004" name="Nature">
        <title>The DNA sequence and comparative analysis of human chromosome 5.</title>
        <authorList>
            <person name="Schmutz J."/>
            <person name="Martin J."/>
            <person name="Terry A."/>
            <person name="Couronne O."/>
            <person name="Grimwood J."/>
            <person name="Lowry S."/>
            <person name="Gordon L.A."/>
            <person name="Scott D."/>
            <person name="Xie G."/>
            <person name="Huang W."/>
            <person name="Hellsten U."/>
            <person name="Tran-Gyamfi M."/>
            <person name="She X."/>
            <person name="Prabhakar S."/>
            <person name="Aerts A."/>
            <person name="Altherr M."/>
            <person name="Bajorek E."/>
            <person name="Black S."/>
            <person name="Branscomb E."/>
            <person name="Caoile C."/>
            <person name="Challacombe J.F."/>
            <person name="Chan Y.M."/>
            <person name="Denys M."/>
            <person name="Detter J.C."/>
            <person name="Escobar J."/>
            <person name="Flowers D."/>
            <person name="Fotopulos D."/>
            <person name="Glavina T."/>
            <person name="Gomez M."/>
            <person name="Gonzales E."/>
            <person name="Goodstein D."/>
            <person name="Grigoriev I."/>
            <person name="Groza M."/>
            <person name="Hammon N."/>
            <person name="Hawkins T."/>
            <person name="Haydu L."/>
            <person name="Israni S."/>
            <person name="Jett J."/>
            <person name="Kadner K."/>
            <person name="Kimball H."/>
            <person name="Kobayashi A."/>
            <person name="Lopez F."/>
            <person name="Lou Y."/>
            <person name="Martinez D."/>
            <person name="Medina C."/>
            <person name="Morgan J."/>
            <person name="Nandkeshwar R."/>
            <person name="Noonan J.P."/>
            <person name="Pitluck S."/>
            <person name="Pollard M."/>
            <person name="Predki P."/>
            <person name="Priest J."/>
            <person name="Ramirez L."/>
            <person name="Retterer J."/>
            <person name="Rodriguez A."/>
            <person name="Rogers S."/>
            <person name="Salamov A."/>
            <person name="Salazar A."/>
            <person name="Thayer N."/>
            <person name="Tice H."/>
            <person name="Tsai M."/>
            <person name="Ustaszewska A."/>
            <person name="Vo N."/>
            <person name="Wheeler J."/>
            <person name="Wu K."/>
            <person name="Yang J."/>
            <person name="Dickson M."/>
            <person name="Cheng J.-F."/>
            <person name="Eichler E.E."/>
            <person name="Olsen A."/>
            <person name="Pennacchio L.A."/>
            <person name="Rokhsar D.S."/>
            <person name="Richardson P."/>
            <person name="Lucas S.M."/>
            <person name="Myers R.M."/>
            <person name="Rubin E.M."/>
        </authorList>
    </citation>
    <scope>NUCLEOTIDE SEQUENCE [LARGE SCALE GENOMIC DNA]</scope>
</reference>
<reference key="3">
    <citation type="submission" date="2005-09" db="EMBL/GenBank/DDBJ databases">
        <authorList>
            <person name="Mural R.J."/>
            <person name="Istrail S."/>
            <person name="Sutton G.G."/>
            <person name="Florea L."/>
            <person name="Halpern A.L."/>
            <person name="Mobarry C.M."/>
            <person name="Lippert R."/>
            <person name="Walenz B."/>
            <person name="Shatkay H."/>
            <person name="Dew I."/>
            <person name="Miller J.R."/>
            <person name="Flanigan M.J."/>
            <person name="Edwards N.J."/>
            <person name="Bolanos R."/>
            <person name="Fasulo D."/>
            <person name="Halldorsson B.V."/>
            <person name="Hannenhalli S."/>
            <person name="Turner R."/>
            <person name="Yooseph S."/>
            <person name="Lu F."/>
            <person name="Nusskern D.R."/>
            <person name="Shue B.C."/>
            <person name="Zheng X.H."/>
            <person name="Zhong F."/>
            <person name="Delcher A.L."/>
            <person name="Huson D.H."/>
            <person name="Kravitz S.A."/>
            <person name="Mouchard L."/>
            <person name="Reinert K."/>
            <person name="Remington K.A."/>
            <person name="Clark A.G."/>
            <person name="Waterman M.S."/>
            <person name="Eichler E.E."/>
            <person name="Adams M.D."/>
            <person name="Hunkapiller M.W."/>
            <person name="Myers E.W."/>
            <person name="Venter J.C."/>
        </authorList>
    </citation>
    <scope>NUCLEOTIDE SEQUENCE [LARGE SCALE GENOMIC DNA]</scope>
</reference>
<reference key="4">
    <citation type="journal article" date="2004" name="Genome Res.">
        <title>The status, quality, and expansion of the NIH full-length cDNA project: the Mammalian Gene Collection (MGC).</title>
        <authorList>
            <consortium name="The MGC Project Team"/>
        </authorList>
    </citation>
    <scope>NUCLEOTIDE SEQUENCE [LARGE SCALE MRNA]</scope>
</reference>
<reference key="5">
    <citation type="journal article" date="2005" name="Genome Biol.">
        <title>The interferon-inducible p47 (IRG) GTPases in vertebrates: loss of the cell autonomous resistance mechanism in the human lineage.</title>
        <authorList>
            <person name="Bekpen C."/>
            <person name="Hunn J.P."/>
            <person name="Rohde C."/>
            <person name="Parvanova I."/>
            <person name="Guethlein L."/>
            <person name="Dunn D.M."/>
            <person name="Glowalla E."/>
            <person name="Leptin M."/>
            <person name="Howard J.C."/>
        </authorList>
    </citation>
    <scope>IDENTIFICATION</scope>
    <scope>INDUCTION</scope>
</reference>
<reference key="6">
    <citation type="journal article" date="2006" name="Science">
        <title>Human IRGM induces autophagy to eliminate intracellular mycobacteria.</title>
        <authorList>
            <person name="Singh S.B."/>
            <person name="Davis A.S."/>
            <person name="Taylor G.A."/>
            <person name="Deretic V."/>
        </authorList>
    </citation>
    <scope>FUNCTION</scope>
    <scope>TISSUE SPECIFICITY</scope>
</reference>
<reference key="7">
    <citation type="journal article" date="2007" name="Nat. Genet.">
        <title>Sequence variants in the autophagy gene IRGM and multiple other replicating loci contribute to Crohn's disease susceptibility.</title>
        <authorList>
            <person name="Parkes M."/>
            <person name="Barrett J.C."/>
            <person name="Prescott N.J."/>
            <person name="Tremelling M."/>
            <person name="Anderson C.A."/>
            <person name="Fisher S.A."/>
            <person name="Roberts R.G."/>
            <person name="Nimmo E.R."/>
            <person name="Cummings F.R."/>
            <person name="Soars D."/>
            <person name="Drummond H."/>
            <person name="Lees C.W."/>
            <person name="Khawaja S.A."/>
            <person name="Bagnall R."/>
            <person name="Burke D.A."/>
            <person name="Todhunter C.E."/>
            <person name="Ahmad T."/>
            <person name="Onnie C.M."/>
            <person name="McArdle W."/>
            <person name="Strachan D."/>
            <person name="Bethel G."/>
            <person name="Bryan C."/>
            <person name="Lewis C.M."/>
            <person name="Deloukas P."/>
            <person name="Forbes A."/>
            <person name="Sanderson J."/>
            <person name="Jewell D.P."/>
            <person name="Satsangi J."/>
            <person name="Mansfield J.C."/>
            <person name="Cardon L."/>
            <person name="Mathew C.G."/>
        </authorList>
    </citation>
    <scope>INVOLVEMENT IN IBD19</scope>
    <scope>VARIANTS ASP-17 AND LYS-94</scope>
    <scope>TISSUE SPECIFICITY</scope>
</reference>
<reference key="8">
    <citation type="journal article" date="2008" name="Nat. Genet.">
        <title>Deletion polymorphism upstream of IRGM associated with altered IRGM expression and Crohn's disease.</title>
        <authorList>
            <person name="McCarroll S.A."/>
            <person name="Huett A."/>
            <person name="Kuballa P."/>
            <person name="Chilewski S.D."/>
            <person name="Landry A."/>
            <person name="Goyette P."/>
            <person name="Zody M.C."/>
            <person name="Hall J.L."/>
            <person name="Brant S.R."/>
            <person name="Cho J.H."/>
            <person name="Duerr R.H."/>
            <person name="Silverberg M.S."/>
            <person name="Taylor K.D."/>
            <person name="Rioux J.D."/>
            <person name="Altshuler D."/>
            <person name="Daly M.J."/>
            <person name="Xavier R.J."/>
        </authorList>
    </citation>
    <scope>FUNCTION</scope>
    <scope>INVOLVEMENT IN IBD19</scope>
</reference>
<reference key="9">
    <citation type="journal article" date="2009" name="PLoS Pathog.">
        <title>Autophagy gene variant IRGM -261T contributes to protection from tuberculosis caused by Mycobacterium tuberculosis but not by M. africanum strains.</title>
        <authorList>
            <person name="Intemann C.D."/>
            <person name="Thye T."/>
            <person name="Niemann S."/>
            <person name="Browne E.N."/>
            <person name="Amanua Chinbuah M."/>
            <person name="Enimil A."/>
            <person name="Gyapong J."/>
            <person name="Osei I."/>
            <person name="Owusu-Dabo E."/>
            <person name="Helm S."/>
            <person name="Ruesch-Gerdes S."/>
            <person name="Horstmann R.D."/>
            <person name="Meyer C.G."/>
        </authorList>
    </citation>
    <scope>POLYMORPHISM</scope>
</reference>
<reference key="10">
    <citation type="journal article" date="2009" name="Am. J. Gastroenterol.">
        <title>Confirmation of multiple Crohn's disease susceptibility loci in a large Dutch-Belgian cohort.</title>
        <authorList>
            <person name="Weersma R.K."/>
            <person name="Stokkers P.C."/>
            <person name="Cleynen I."/>
            <person name="Wolfkamp S.C."/>
            <person name="Henckaerts L."/>
            <person name="Schreiber S."/>
            <person name="Dijkstra G."/>
            <person name="Franke A."/>
            <person name="Nolte I.M."/>
            <person name="Rutgeerts P."/>
            <person name="Wijmenga C."/>
            <person name="Vermeire S."/>
        </authorList>
    </citation>
    <scope>INVOLVEMENT IN IBD19</scope>
</reference>
<reference key="11">
    <citation type="journal article" date="2010" name="Hum. Mol. Genet.">
        <title>Independent and population-specific association of risk variants at the IRGM locus with Crohn's disease.</title>
        <authorList>
            <person name="Prescott N.J."/>
            <person name="Dominy K.M."/>
            <person name="Kubo M."/>
            <person name="Lewis C.M."/>
            <person name="Fisher S.A."/>
            <person name="Redon R."/>
            <person name="Huang N."/>
            <person name="Stranger B.E."/>
            <person name="Blaszczyk K."/>
            <person name="Hudspith B."/>
            <person name="Parkes G."/>
            <person name="Hosono N."/>
            <person name="Yamazaki K."/>
            <person name="Onnie C.M."/>
            <person name="Forbes A."/>
            <person name="Dermitzakis E.T."/>
            <person name="Nakamura Y."/>
            <person name="Mansfield J.C."/>
            <person name="Sanderson J."/>
            <person name="Hurles M.E."/>
            <person name="Roberts R.G."/>
            <person name="Mathew C.G."/>
        </authorList>
    </citation>
    <scope>INVOLVEMENT IN IBD19</scope>
</reference>
<reference key="12">
    <citation type="journal article" date="2010" name="Nat. Cell Biol.">
        <title>Human IRGM regulates autophagy and cell-autonomous immunity functions through mitochondria.</title>
        <authorList>
            <person name="Singh S.B."/>
            <person name="Ornatowski W."/>
            <person name="Vergne I."/>
            <person name="Naylor J."/>
            <person name="Delgado M."/>
            <person name="Roberts E."/>
            <person name="Ponpuak M."/>
            <person name="Master S."/>
            <person name="Pilli M."/>
            <person name="White E."/>
            <person name="Komatsu M."/>
            <person name="Deretic V."/>
        </authorList>
    </citation>
    <scope>ALTERNATIVE SPLICING (ISOFORMS IRGMA; IRGMB; IRGMC AND IRGMD)</scope>
    <scope>FUNCTION (ISOFORM IRGMD)</scope>
    <scope>SUBCELLULAR LOCATION (ISOFORM IRGMD)</scope>
</reference>
<reference key="13">
    <citation type="journal article" date="2011" name="Nat. Genet.">
        <title>A synonymous variant in IRGM alters a binding site for miR-196 and causes deregulation of IRGM-dependent xenophagy in Crohn's disease.</title>
        <authorList>
            <person name="Brest P."/>
            <person name="Lapaquette P."/>
            <person name="Souidi M."/>
            <person name="Lebrigand K."/>
            <person name="Cesaro A."/>
            <person name="Vouret-Craviari V."/>
            <person name="Mari B."/>
            <person name="Barbry P."/>
            <person name="Mosnier J.F."/>
            <person name="Hebuterne X."/>
            <person name="Harel-Bellan A."/>
            <person name="Mograbi B."/>
            <person name="Darfeuille-Michaud A."/>
            <person name="Hofman P."/>
        </authorList>
    </citation>
    <scope>INVOLVEMENT IN IBD19</scope>
</reference>
<reference key="14">
    <citation type="journal article" date="2015" name="Mol. Cell">
        <title>IRGM governs the core autophagy machinery to conduct antimicrobial defense.</title>
        <authorList>
            <person name="Chauhan S."/>
            <person name="Mandell M.A."/>
            <person name="Deretic V."/>
        </authorList>
    </citation>
    <scope>FUNCTION</scope>
    <scope>INTERACTION WITH ATG16L1; NOD2; BECN1 AND ULK1</scope>
    <scope>UBIQUITINATION</scope>
</reference>
<reference key="15">
    <citation type="journal article" date="2017" name="Proc. Natl. Acad. Sci. U.S.A.">
        <title>Hepatitis C virus triggers Golgi fragmentation and autophagy through the immunity-related GTPase M.</title>
        <authorList>
            <person name="Hansen M.D."/>
            <person name="Johnsen I.B."/>
            <person name="Stiberg K.A."/>
            <person name="Sherstova T."/>
            <person name="Wakita T."/>
            <person name="Richard G.M."/>
            <person name="Kandasamy R.K."/>
            <person name="Meurs E.F."/>
            <person name="Anthonsen M.W."/>
        </authorList>
    </citation>
    <scope>FUNCTION (MICROBIAL INFECTION)</scope>
    <scope>SUBCELLULAR LOCATION</scope>
</reference>
<reference key="16">
    <citation type="journal article" date="2018" name="J. Cell Biol.">
        <title>Mechanism of Stx17 recruitment to autophagosomes via IRGM and mammalian Atg8 proteins.</title>
        <authorList>
            <person name="Kumar S."/>
            <person name="Jain A."/>
            <person name="Farzam F."/>
            <person name="Jia J."/>
            <person name="Gu Y."/>
            <person name="Choi S.W."/>
            <person name="Mudd M.H."/>
            <person name="Claude-Taupin A."/>
            <person name="Wester M.J."/>
            <person name="Lidke K.A."/>
            <person name="Rusten T.E."/>
            <person name="Deretic V."/>
        </authorList>
    </citation>
    <scope>FUNCTION</scope>
    <scope>CATALYTIC ACTIVITY</scope>
    <scope>SUBCELLULAR LOCATION</scope>
    <scope>INTERACTION WITH STX17; GABARAP; GABARAPL1; GABARAPL2; MAP1LC3A; MAP1LC3B; MAP1LC3C AND MAP1LC3B2</scope>
    <scope>MUTAGENESIS OF SER-47</scope>
</reference>
<reference key="17">
    <citation type="journal article" date="2019" name="Mol. Cell">
        <title>The Crohn's disease risk factor IRGM limits NLRP3 inflammasome activation by impeding its assembly and by mediating its selective autophagy.</title>
        <authorList>
            <person name="Mehto S."/>
            <person name="Jena K.K."/>
            <person name="Nath P."/>
            <person name="Chauhan S."/>
            <person name="Kolapalli S.P."/>
            <person name="Das S.K."/>
            <person name="Sahoo P.K."/>
            <person name="Jain A."/>
            <person name="Taylor G.A."/>
            <person name="Chauhan S."/>
        </authorList>
    </citation>
    <scope>FUNCTION</scope>
    <scope>CATALYTIC ACTIVITY</scope>
    <scope>INTERACTION WITH NLRP3</scope>
    <scope>MUTAGENESIS OF SER-47</scope>
</reference>
<reference key="18">
    <citation type="journal article" date="2020" name="EMBO Rep.">
        <title>Autoimmunity gene IRGM suppresses cGAS-STING and RIG-I-MAVS signaling to control interferon response.</title>
        <authorList>
            <person name="Jena K.K."/>
            <person name="Mehto S."/>
            <person name="Nath P."/>
            <person name="Chauhan N.R."/>
            <person name="Sahu R."/>
            <person name="Dhar K."/>
            <person name="Das S.K."/>
            <person name="Kolapalli S.P."/>
            <person name="Murmu K.C."/>
            <person name="Jain A."/>
            <person name="Krishna S."/>
            <person name="Sahoo B.S."/>
            <person name="Chattopadhyay S."/>
            <person name="Rusten T.E."/>
            <person name="Prasad P."/>
            <person name="Chauhan S."/>
            <person name="Chauhan S."/>
        </authorList>
    </citation>
    <scope>FUNCTION</scope>
    <scope>INTERACTION WITH CGAS AND RIGI</scope>
</reference>
<reference key="19">
    <citation type="journal article" date="2020" name="FASEB J.">
        <title>IRGM promotes the PINK1-mediated mitophagy through the degradation of Mitofilin in SH-SY5Y cells.</title>
        <authorList>
            <person name="Guo X."/>
            <person name="Zhang W."/>
            <person name="Wang C."/>
            <person name="Zhang B."/>
            <person name="Li R."/>
            <person name="Zhang L."/>
            <person name="Zhao K."/>
            <person name="Li Y."/>
            <person name="Tian L."/>
            <person name="Li B."/>
            <person name="Cheng H."/>
            <person name="Li L."/>
            <person name="Pei C."/>
            <person name="Xu H."/>
        </authorList>
    </citation>
    <scope>FUNCTION</scope>
</reference>
<reference key="20">
    <citation type="journal article" date="2020" name="Nat. Cell Biol.">
        <title>Mammalian Atg8 proteins and the autophagy factor IRGM control mTOR and TFEB at a regulatory node critical for responses to pathogens.</title>
        <authorList>
            <person name="Kumar S."/>
            <person name="Jain A."/>
            <person name="Choi S.W."/>
            <person name="da Silva G.P.D."/>
            <person name="Allers L."/>
            <person name="Mudd M.H."/>
            <person name="Peters R.S."/>
            <person name="Anonsen J.H."/>
            <person name="Rusten T.E."/>
            <person name="Lazarou M."/>
            <person name="Deretic V."/>
        </authorList>
    </citation>
    <scope>FUNCTION</scope>
    <scope>INTERACTION WITH TFEB AND PPP3CB</scope>
</reference>
<reference key="21">
    <citation type="journal article" date="2021" name="EMBO Rep.">
        <title>Inhibition of IRGM establishes a robust antiviral immune state to restrict pathogenic viruses.</title>
        <authorList>
            <person name="Nath P."/>
            <person name="Chauhan N.R."/>
            <person name="Jena K.K."/>
            <person name="Datey A."/>
            <person name="Kumar N.D."/>
            <person name="Mehto S."/>
            <person name="De S."/>
            <person name="Nayak T.K."/>
            <person name="Priyadarsini S."/>
            <person name="Rout K."/>
            <person name="Bal R."/>
            <person name="Murmu K.C."/>
            <person name="Kalia M."/>
            <person name="Patnaik S."/>
            <person name="Prasad P."/>
            <person name="Reggiori F."/>
            <person name="Chattopadhyay S."/>
            <person name="Chauhan S."/>
        </authorList>
    </citation>
    <scope>FUNCTION</scope>
</reference>
<reference key="22">
    <citation type="journal article" date="2022" name="EMBO J.">
        <title>Selective autophagy of RIPosomes maintains innate immune homeostasis during bacterial infection.</title>
        <authorList>
            <person name="Mehto S."/>
            <person name="Jena K.K."/>
            <person name="Yadav R."/>
            <person name="Priyadarsini S."/>
            <person name="Samal P."/>
            <person name="Krishna S."/>
            <person name="Dhar K."/>
            <person name="Jain A."/>
            <person name="Chauhan N.R."/>
            <person name="Murmu K.C."/>
            <person name="Bal R."/>
            <person name="Sahu R."/>
            <person name="Jaiswal P."/>
            <person name="Sahoo B.S."/>
            <person name="Patnaik S."/>
            <person name="Kufer T.A."/>
            <person name="Rusten T.E."/>
            <person name="Chauhan S."/>
            <person name="Prasad P."/>
            <person name="Chauhan S."/>
        </authorList>
    </citation>
    <scope>FUNCTION</scope>
    <scope>INTERACTION WITH NOD1; NOD2 AND RIPK2</scope>
</reference>
<gene>
    <name evidence="24 28" type="primary">IRGM</name>
    <name type="synonym">IFI1</name>
    <name evidence="28" type="synonym">IRGM1</name>
    <name evidence="23" type="synonym">LRG47</name>
</gene>
<proteinExistence type="evidence at protein level"/>
<accession>A1A4Y4</accession>
<accession>B3VEX0</accession>
<accession>H0YBM2</accession>
<keyword id="KW-0025">Alternative splicing</keyword>
<keyword id="KW-0072">Autophagy</keyword>
<keyword id="KW-1003">Cell membrane</keyword>
<keyword id="KW-0966">Cell projection</keyword>
<keyword id="KW-0968">Cytoplasmic vesicle</keyword>
<keyword id="KW-0967">Endosome</keyword>
<keyword id="KW-0333">Golgi apparatus</keyword>
<keyword id="KW-0342">GTP-binding</keyword>
<keyword id="KW-0378">Hydrolase</keyword>
<keyword id="KW-0391">Immunity</keyword>
<keyword id="KW-0395">Inflammatory response</keyword>
<keyword id="KW-0399">Innate immunity</keyword>
<keyword id="KW-0458">Lysosome</keyword>
<keyword id="KW-0472">Membrane</keyword>
<keyword id="KW-0496">Mitochondrion</keyword>
<keyword id="KW-0547">Nucleotide-binding</keyword>
<keyword id="KW-1185">Reference proteome</keyword>
<keyword id="KW-0832">Ubl conjugation</keyword>